<accession>Q9CWS4</accession>
<accession>Q3TJ34</accession>
<accession>Q3U7B0</accession>
<accession>Q91X99</accession>
<accession>Q922F0</accession>
<name>INT11_MOUSE</name>
<dbReference type="EC" id="3.1.27.-" evidence="2"/>
<dbReference type="EMBL" id="AK010425">
    <property type="protein sequence ID" value="BAB26928.1"/>
    <property type="molecule type" value="mRNA"/>
</dbReference>
<dbReference type="EMBL" id="AK090206">
    <property type="protein sequence ID" value="BAC41135.1"/>
    <property type="molecule type" value="mRNA"/>
</dbReference>
<dbReference type="EMBL" id="AK150436">
    <property type="protein sequence ID" value="BAE29558.1"/>
    <property type="molecule type" value="mRNA"/>
</dbReference>
<dbReference type="EMBL" id="AK152740">
    <property type="protein sequence ID" value="BAE31460.1"/>
    <property type="molecule type" value="mRNA"/>
</dbReference>
<dbReference type="EMBL" id="AK167607">
    <property type="protein sequence ID" value="BAE39661.1"/>
    <property type="molecule type" value="mRNA"/>
</dbReference>
<dbReference type="EMBL" id="AK172533">
    <property type="protein sequence ID" value="BAE43054.1"/>
    <property type="molecule type" value="mRNA"/>
</dbReference>
<dbReference type="EMBL" id="BC008240">
    <property type="protein sequence ID" value="AAH08240.1"/>
    <property type="status" value="ALT_INIT"/>
    <property type="molecule type" value="mRNA"/>
</dbReference>
<dbReference type="EMBL" id="BC011155">
    <property type="protein sequence ID" value="AAH11155.1"/>
    <property type="molecule type" value="mRNA"/>
</dbReference>
<dbReference type="CCDS" id="CCDS19048.1"/>
<dbReference type="RefSeq" id="NP_082296.1">
    <property type="nucleotide sequence ID" value="NM_028020.4"/>
</dbReference>
<dbReference type="RefSeq" id="XP_006539258.1">
    <property type="nucleotide sequence ID" value="XM_006539195.2"/>
</dbReference>
<dbReference type="SMR" id="Q9CWS4"/>
<dbReference type="BioGRID" id="215056">
    <property type="interactions" value="2"/>
</dbReference>
<dbReference type="FunCoup" id="Q9CWS4">
    <property type="interactions" value="3426"/>
</dbReference>
<dbReference type="STRING" id="10090.ENSMUSP00000030901"/>
<dbReference type="iPTMnet" id="Q9CWS4"/>
<dbReference type="PhosphoSitePlus" id="Q9CWS4"/>
<dbReference type="PaxDb" id="10090-ENSMUSP00000030901"/>
<dbReference type="ProteomicsDB" id="268973"/>
<dbReference type="Pumba" id="Q9CWS4"/>
<dbReference type="Antibodypedia" id="26257">
    <property type="antibodies" value="197 antibodies from 26 providers"/>
</dbReference>
<dbReference type="DNASU" id="71957"/>
<dbReference type="Ensembl" id="ENSMUST00000030901.9">
    <property type="protein sequence ID" value="ENSMUSP00000030901.3"/>
    <property type="gene ID" value="ENSMUSG00000029034.10"/>
</dbReference>
<dbReference type="GeneID" id="71957"/>
<dbReference type="KEGG" id="mmu:71957"/>
<dbReference type="UCSC" id="uc008wfh.1">
    <property type="organism name" value="mouse"/>
</dbReference>
<dbReference type="AGR" id="MGI:1919207"/>
<dbReference type="CTD" id="54973"/>
<dbReference type="MGI" id="MGI:1919207">
    <property type="gene designation" value="Ints11"/>
</dbReference>
<dbReference type="VEuPathDB" id="HostDB:ENSMUSG00000029034"/>
<dbReference type="eggNOG" id="KOG1136">
    <property type="taxonomic scope" value="Eukaryota"/>
</dbReference>
<dbReference type="GeneTree" id="ENSGT00940000157644"/>
<dbReference type="HOGENOM" id="CLU_009673_3_2_1"/>
<dbReference type="InParanoid" id="Q9CWS4"/>
<dbReference type="OMA" id="YLDGMIW"/>
<dbReference type="OrthoDB" id="10249535at2759"/>
<dbReference type="PhylomeDB" id="Q9CWS4"/>
<dbReference type="TreeFam" id="TF105878"/>
<dbReference type="Reactome" id="R-MMU-6807505">
    <property type="pathway name" value="RNA polymerase II transcribes snRNA genes"/>
</dbReference>
<dbReference type="BioGRID-ORCS" id="71957">
    <property type="hits" value="27 hits in 77 CRISPR screens"/>
</dbReference>
<dbReference type="ChiTaRS" id="Ints11">
    <property type="organism name" value="mouse"/>
</dbReference>
<dbReference type="PRO" id="PR:Q9CWS4"/>
<dbReference type="Proteomes" id="UP000000589">
    <property type="component" value="Chromosome 4"/>
</dbReference>
<dbReference type="RNAct" id="Q9CWS4">
    <property type="molecule type" value="protein"/>
</dbReference>
<dbReference type="Bgee" id="ENSMUSG00000029034">
    <property type="expression patterns" value="Expressed in ectoplacental cone and 250 other cell types or tissues"/>
</dbReference>
<dbReference type="ExpressionAtlas" id="Q9CWS4">
    <property type="expression patterns" value="baseline and differential"/>
</dbReference>
<dbReference type="GO" id="GO:0005737">
    <property type="term" value="C:cytoplasm"/>
    <property type="evidence" value="ECO:0000250"/>
    <property type="project" value="UniProtKB"/>
</dbReference>
<dbReference type="GO" id="GO:0005829">
    <property type="term" value="C:cytosol"/>
    <property type="evidence" value="ECO:0007669"/>
    <property type="project" value="Ensembl"/>
</dbReference>
<dbReference type="GO" id="GO:0160232">
    <property type="term" value="C:INTAC complex"/>
    <property type="evidence" value="ECO:0000250"/>
    <property type="project" value="UniProtKB"/>
</dbReference>
<dbReference type="GO" id="GO:0032039">
    <property type="term" value="C:integrator complex"/>
    <property type="evidence" value="ECO:0000314"/>
    <property type="project" value="UniProtKB"/>
</dbReference>
<dbReference type="GO" id="GO:0005654">
    <property type="term" value="C:nucleoplasm"/>
    <property type="evidence" value="ECO:0007669"/>
    <property type="project" value="Ensembl"/>
</dbReference>
<dbReference type="GO" id="GO:0005634">
    <property type="term" value="C:nucleus"/>
    <property type="evidence" value="ECO:0000250"/>
    <property type="project" value="UniProtKB"/>
</dbReference>
<dbReference type="GO" id="GO:0004521">
    <property type="term" value="F:RNA endonuclease activity"/>
    <property type="evidence" value="ECO:0000314"/>
    <property type="project" value="UniProtKB"/>
</dbReference>
<dbReference type="GO" id="GO:0160240">
    <property type="term" value="P:RNA polymerase II transcription initiation surveillance"/>
    <property type="evidence" value="ECO:0000314"/>
    <property type="project" value="UniProtKB"/>
</dbReference>
<dbReference type="GO" id="GO:0034472">
    <property type="term" value="P:snRNA 3'-end processing"/>
    <property type="evidence" value="ECO:0000250"/>
    <property type="project" value="UniProtKB"/>
</dbReference>
<dbReference type="GO" id="GO:0016180">
    <property type="term" value="P:snRNA processing"/>
    <property type="evidence" value="ECO:0000250"/>
    <property type="project" value="HGNC"/>
</dbReference>
<dbReference type="CDD" id="cd16291">
    <property type="entry name" value="INTS11-like_MBL-fold"/>
    <property type="match status" value="1"/>
</dbReference>
<dbReference type="FunFam" id="3.40.50.10890:FF:000002">
    <property type="entry name" value="Integrator complex subunit 11"/>
    <property type="match status" value="1"/>
</dbReference>
<dbReference type="FunFam" id="3.60.15.10:FF:000003">
    <property type="entry name" value="Integrator complex subunit 11"/>
    <property type="match status" value="1"/>
</dbReference>
<dbReference type="Gene3D" id="3.40.50.10890">
    <property type="match status" value="1"/>
</dbReference>
<dbReference type="Gene3D" id="3.60.15.10">
    <property type="entry name" value="Ribonuclease Z/Hydroxyacylglutathione hydrolase-like"/>
    <property type="match status" value="1"/>
</dbReference>
<dbReference type="InterPro" id="IPR022712">
    <property type="entry name" value="Beta_Casp"/>
</dbReference>
<dbReference type="InterPro" id="IPR041897">
    <property type="entry name" value="INTS11-like_MBL-fold"/>
</dbReference>
<dbReference type="InterPro" id="IPR048662">
    <property type="entry name" value="IntS11_C"/>
</dbReference>
<dbReference type="InterPro" id="IPR050698">
    <property type="entry name" value="MBL"/>
</dbReference>
<dbReference type="InterPro" id="IPR001279">
    <property type="entry name" value="Metallo-B-lactamas"/>
</dbReference>
<dbReference type="InterPro" id="IPR036866">
    <property type="entry name" value="RibonucZ/Hydroxyglut_hydro"/>
</dbReference>
<dbReference type="InterPro" id="IPR011108">
    <property type="entry name" value="RMMBL"/>
</dbReference>
<dbReference type="PANTHER" id="PTHR11203">
    <property type="entry name" value="CLEAVAGE AND POLYADENYLATION SPECIFICITY FACTOR FAMILY MEMBER"/>
    <property type="match status" value="1"/>
</dbReference>
<dbReference type="PANTHER" id="PTHR11203:SF37">
    <property type="entry name" value="INTEGRATOR COMPLEX SUBUNIT 11"/>
    <property type="match status" value="1"/>
</dbReference>
<dbReference type="Pfam" id="PF10996">
    <property type="entry name" value="Beta-Casp"/>
    <property type="match status" value="1"/>
</dbReference>
<dbReference type="Pfam" id="PF21386">
    <property type="entry name" value="IntS11_C"/>
    <property type="match status" value="1"/>
</dbReference>
<dbReference type="Pfam" id="PF16661">
    <property type="entry name" value="Lactamase_B_6"/>
    <property type="match status" value="1"/>
</dbReference>
<dbReference type="Pfam" id="PF07521">
    <property type="entry name" value="RMMBL"/>
    <property type="match status" value="1"/>
</dbReference>
<dbReference type="SMART" id="SM01027">
    <property type="entry name" value="Beta-Casp"/>
    <property type="match status" value="1"/>
</dbReference>
<dbReference type="SMART" id="SM00849">
    <property type="entry name" value="Lactamase_B"/>
    <property type="match status" value="1"/>
</dbReference>
<dbReference type="SUPFAM" id="SSF56281">
    <property type="entry name" value="Metallo-hydrolase/oxidoreductase"/>
    <property type="match status" value="1"/>
</dbReference>
<organism>
    <name type="scientific">Mus musculus</name>
    <name type="common">Mouse</name>
    <dbReference type="NCBI Taxonomy" id="10090"/>
    <lineage>
        <taxon>Eukaryota</taxon>
        <taxon>Metazoa</taxon>
        <taxon>Chordata</taxon>
        <taxon>Craniata</taxon>
        <taxon>Vertebrata</taxon>
        <taxon>Euteleostomi</taxon>
        <taxon>Mammalia</taxon>
        <taxon>Eutheria</taxon>
        <taxon>Euarchontoglires</taxon>
        <taxon>Glires</taxon>
        <taxon>Rodentia</taxon>
        <taxon>Myomorpha</taxon>
        <taxon>Muroidea</taxon>
        <taxon>Muridae</taxon>
        <taxon>Murinae</taxon>
        <taxon>Mus</taxon>
        <taxon>Mus</taxon>
    </lineage>
</organism>
<keyword id="KW-0963">Cytoplasm</keyword>
<keyword id="KW-0378">Hydrolase</keyword>
<keyword id="KW-1017">Isopeptide bond</keyword>
<keyword id="KW-0479">Metal-binding</keyword>
<keyword id="KW-0539">Nucleus</keyword>
<keyword id="KW-1185">Reference proteome</keyword>
<keyword id="KW-0832">Ubl conjugation</keyword>
<keyword id="KW-0862">Zinc</keyword>
<proteinExistence type="evidence at protein level"/>
<protein>
    <recommendedName>
        <fullName evidence="4">Integrator complex subunit 11</fullName>
        <shortName>Int11</shortName>
        <ecNumber evidence="2">3.1.27.-</ecNumber>
    </recommendedName>
    <alternativeName>
        <fullName>Cleavage and polyadenylation-specific factor 3-like protein</fullName>
        <shortName>CPSF3-like protein</shortName>
    </alternativeName>
</protein>
<evidence type="ECO:0000250" key="1">
    <source>
        <dbReference type="UniProtKB" id="Q5TA45"/>
    </source>
</evidence>
<evidence type="ECO:0000269" key="2">
    <source>
    </source>
</evidence>
<evidence type="ECO:0000303" key="3">
    <source>
    </source>
</evidence>
<evidence type="ECO:0000305" key="4"/>
<evidence type="ECO:0000312" key="5">
    <source>
        <dbReference type="MGI" id="MGI:1919207"/>
    </source>
</evidence>
<feature type="chain" id="PRO_0000259564" description="Integrator complex subunit 11">
    <location>
        <begin position="1"/>
        <end position="600"/>
    </location>
</feature>
<feature type="short sequence motif" description="HXHXDH motif">
    <location>
        <begin position="68"/>
        <end position="73"/>
    </location>
</feature>
<feature type="short sequence motif" description="Nuclear localization signal" evidence="1">
    <location>
        <begin position="469"/>
        <end position="479"/>
    </location>
</feature>
<feature type="active site" evidence="1">
    <location>
        <position position="203"/>
    </location>
</feature>
<feature type="binding site" evidence="1">
    <location>
        <position position="68"/>
    </location>
    <ligand>
        <name>Zn(2+)</name>
        <dbReference type="ChEBI" id="CHEBI:29105"/>
        <label>1</label>
    </ligand>
</feature>
<feature type="binding site" evidence="1">
    <location>
        <position position="70"/>
    </location>
    <ligand>
        <name>Zn(2+)</name>
        <dbReference type="ChEBI" id="CHEBI:29105"/>
        <label>1</label>
    </ligand>
</feature>
<feature type="binding site" evidence="1">
    <location>
        <position position="72"/>
    </location>
    <ligand>
        <name>Zn(2+)</name>
        <dbReference type="ChEBI" id="CHEBI:29105"/>
        <label>2</label>
    </ligand>
</feature>
<feature type="binding site" evidence="1">
    <location>
        <position position="73"/>
    </location>
    <ligand>
        <name>Zn(2+)</name>
        <dbReference type="ChEBI" id="CHEBI:29105"/>
        <label>2</label>
    </ligand>
</feature>
<feature type="binding site" evidence="1">
    <location>
        <position position="157"/>
    </location>
    <ligand>
        <name>Zn(2+)</name>
        <dbReference type="ChEBI" id="CHEBI:29105"/>
        <label>1</label>
    </ligand>
</feature>
<feature type="binding site" evidence="1">
    <location>
        <position position="178"/>
    </location>
    <ligand>
        <name>Zn(2+)</name>
        <dbReference type="ChEBI" id="CHEBI:29105"/>
        <label>1</label>
    </ligand>
</feature>
<feature type="binding site" evidence="1">
    <location>
        <position position="178"/>
    </location>
    <ligand>
        <name>Zn(2+)</name>
        <dbReference type="ChEBI" id="CHEBI:29105"/>
        <label>2</label>
    </ligand>
</feature>
<feature type="binding site" evidence="1">
    <location>
        <position position="414"/>
    </location>
    <ligand>
        <name>Zn(2+)</name>
        <dbReference type="ChEBI" id="CHEBI:29105"/>
        <label>2</label>
    </ligand>
</feature>
<feature type="cross-link" description="Glycyl lysine isopeptide (Lys-Gly) (interchain with G-Cter in SUMO)" evidence="1">
    <location>
        <position position="381"/>
    </location>
</feature>
<feature type="cross-link" description="Glycyl lysine isopeptide (Lys-Gly) (interchain with G-Cter in SUMO)" evidence="1">
    <location>
        <position position="462"/>
    </location>
</feature>
<feature type="cross-link" description="Glycyl lysine isopeptide (Lys-Gly) (interchain with G-Cter in SUMO)" evidence="1">
    <location>
        <position position="475"/>
    </location>
</feature>
<feature type="sequence conflict" description="In Ref. 2; AAH11155." evidence="4" ref="2">
    <original>V</original>
    <variation>D</variation>
    <location>
        <position position="136"/>
    </location>
</feature>
<feature type="sequence conflict" description="In Ref. 1; BAE31460." evidence="4" ref="1">
    <original>R</original>
    <variation>G</variation>
    <location>
        <position position="297"/>
    </location>
</feature>
<feature type="sequence conflict" description="In Ref. 1; BAE39661." evidence="4" ref="1">
    <original>C</original>
    <variation>R</variation>
    <location>
        <position position="542"/>
    </location>
</feature>
<sequence>MPEIRVTPLGAGQDVGRSCILVSISGKNVMLDCGMHMGYNDDRRFPDFSYITQSGRLTDFLDCVIISHFHLDHCGALPYFSEMVGYDGPIYMTHPTQAICPILLEDYRKIAVDKKGEANFFTSQMIKDCMKKVVAVHLHQTVQVDDELEIKAYYAGHVLGAAMFQIKVGSESVVYTGDYNMTPDRHLGAAWIDKCRPNLLITESTYATTIRDSKRCRERDFLKKVHETVERGGKVLIPVFALGRAQELCILLETFWERMNLKVPIYFSTGLTEKANHYYKLFITWTNQKIRKTFVQRNMFEFKHIKAFDRTFADNPGPMVVFATPGMLHAGQSLQIFRKWAGNEKNMVIMPGYCVQGTVGHKILSGQRKLEMEGRQMLEVKMQVEYMSFSAHADAKGIMQLVGQAEPESVLLVHGEAKKMEFLRQKIEQEFRVSCYMPANGETVTLPTSPSIPVGISLGLLKREMVQGLLPEAKKPRLLHGTLIMKDSNFRLVSSEQALKELGLAEHQLRFTCRVHLQDTRKEQETALRVYSHLKSTLKDHCVQHLPDGSVTVESILIQAAAHSEDPGTKVLLVSWTYQDEELGSFLTTLLKNGLPQAPS</sequence>
<reference key="1">
    <citation type="journal article" date="2005" name="Science">
        <title>The transcriptional landscape of the mammalian genome.</title>
        <authorList>
            <person name="Carninci P."/>
            <person name="Kasukawa T."/>
            <person name="Katayama S."/>
            <person name="Gough J."/>
            <person name="Frith M.C."/>
            <person name="Maeda N."/>
            <person name="Oyama R."/>
            <person name="Ravasi T."/>
            <person name="Lenhard B."/>
            <person name="Wells C."/>
            <person name="Kodzius R."/>
            <person name="Shimokawa K."/>
            <person name="Bajic V.B."/>
            <person name="Brenner S.E."/>
            <person name="Batalov S."/>
            <person name="Forrest A.R."/>
            <person name="Zavolan M."/>
            <person name="Davis M.J."/>
            <person name="Wilming L.G."/>
            <person name="Aidinis V."/>
            <person name="Allen J.E."/>
            <person name="Ambesi-Impiombato A."/>
            <person name="Apweiler R."/>
            <person name="Aturaliya R.N."/>
            <person name="Bailey T.L."/>
            <person name="Bansal M."/>
            <person name="Baxter L."/>
            <person name="Beisel K.W."/>
            <person name="Bersano T."/>
            <person name="Bono H."/>
            <person name="Chalk A.M."/>
            <person name="Chiu K.P."/>
            <person name="Choudhary V."/>
            <person name="Christoffels A."/>
            <person name="Clutterbuck D.R."/>
            <person name="Crowe M.L."/>
            <person name="Dalla E."/>
            <person name="Dalrymple B.P."/>
            <person name="de Bono B."/>
            <person name="Della Gatta G."/>
            <person name="di Bernardo D."/>
            <person name="Down T."/>
            <person name="Engstrom P."/>
            <person name="Fagiolini M."/>
            <person name="Faulkner G."/>
            <person name="Fletcher C.F."/>
            <person name="Fukushima T."/>
            <person name="Furuno M."/>
            <person name="Futaki S."/>
            <person name="Gariboldi M."/>
            <person name="Georgii-Hemming P."/>
            <person name="Gingeras T.R."/>
            <person name="Gojobori T."/>
            <person name="Green R.E."/>
            <person name="Gustincich S."/>
            <person name="Harbers M."/>
            <person name="Hayashi Y."/>
            <person name="Hensch T.K."/>
            <person name="Hirokawa N."/>
            <person name="Hill D."/>
            <person name="Huminiecki L."/>
            <person name="Iacono M."/>
            <person name="Ikeo K."/>
            <person name="Iwama A."/>
            <person name="Ishikawa T."/>
            <person name="Jakt M."/>
            <person name="Kanapin A."/>
            <person name="Katoh M."/>
            <person name="Kawasawa Y."/>
            <person name="Kelso J."/>
            <person name="Kitamura H."/>
            <person name="Kitano H."/>
            <person name="Kollias G."/>
            <person name="Krishnan S.P."/>
            <person name="Kruger A."/>
            <person name="Kummerfeld S.K."/>
            <person name="Kurochkin I.V."/>
            <person name="Lareau L.F."/>
            <person name="Lazarevic D."/>
            <person name="Lipovich L."/>
            <person name="Liu J."/>
            <person name="Liuni S."/>
            <person name="McWilliam S."/>
            <person name="Madan Babu M."/>
            <person name="Madera M."/>
            <person name="Marchionni L."/>
            <person name="Matsuda H."/>
            <person name="Matsuzawa S."/>
            <person name="Miki H."/>
            <person name="Mignone F."/>
            <person name="Miyake S."/>
            <person name="Morris K."/>
            <person name="Mottagui-Tabar S."/>
            <person name="Mulder N."/>
            <person name="Nakano N."/>
            <person name="Nakauchi H."/>
            <person name="Ng P."/>
            <person name="Nilsson R."/>
            <person name="Nishiguchi S."/>
            <person name="Nishikawa S."/>
            <person name="Nori F."/>
            <person name="Ohara O."/>
            <person name="Okazaki Y."/>
            <person name="Orlando V."/>
            <person name="Pang K.C."/>
            <person name="Pavan W.J."/>
            <person name="Pavesi G."/>
            <person name="Pesole G."/>
            <person name="Petrovsky N."/>
            <person name="Piazza S."/>
            <person name="Reed J."/>
            <person name="Reid J.F."/>
            <person name="Ring B.Z."/>
            <person name="Ringwald M."/>
            <person name="Rost B."/>
            <person name="Ruan Y."/>
            <person name="Salzberg S.L."/>
            <person name="Sandelin A."/>
            <person name="Schneider C."/>
            <person name="Schoenbach C."/>
            <person name="Sekiguchi K."/>
            <person name="Semple C.A."/>
            <person name="Seno S."/>
            <person name="Sessa L."/>
            <person name="Sheng Y."/>
            <person name="Shibata Y."/>
            <person name="Shimada H."/>
            <person name="Shimada K."/>
            <person name="Silva D."/>
            <person name="Sinclair B."/>
            <person name="Sperling S."/>
            <person name="Stupka E."/>
            <person name="Sugiura K."/>
            <person name="Sultana R."/>
            <person name="Takenaka Y."/>
            <person name="Taki K."/>
            <person name="Tammoja K."/>
            <person name="Tan S.L."/>
            <person name="Tang S."/>
            <person name="Taylor M.S."/>
            <person name="Tegner J."/>
            <person name="Teichmann S.A."/>
            <person name="Ueda H.R."/>
            <person name="van Nimwegen E."/>
            <person name="Verardo R."/>
            <person name="Wei C.L."/>
            <person name="Yagi K."/>
            <person name="Yamanishi H."/>
            <person name="Zabarovsky E."/>
            <person name="Zhu S."/>
            <person name="Zimmer A."/>
            <person name="Hide W."/>
            <person name="Bult C."/>
            <person name="Grimmond S.M."/>
            <person name="Teasdale R.D."/>
            <person name="Liu E.T."/>
            <person name="Brusic V."/>
            <person name="Quackenbush J."/>
            <person name="Wahlestedt C."/>
            <person name="Mattick J.S."/>
            <person name="Hume D.A."/>
            <person name="Kai C."/>
            <person name="Sasaki D."/>
            <person name="Tomaru Y."/>
            <person name="Fukuda S."/>
            <person name="Kanamori-Katayama M."/>
            <person name="Suzuki M."/>
            <person name="Aoki J."/>
            <person name="Arakawa T."/>
            <person name="Iida J."/>
            <person name="Imamura K."/>
            <person name="Itoh M."/>
            <person name="Kato T."/>
            <person name="Kawaji H."/>
            <person name="Kawagashira N."/>
            <person name="Kawashima T."/>
            <person name="Kojima M."/>
            <person name="Kondo S."/>
            <person name="Konno H."/>
            <person name="Nakano K."/>
            <person name="Ninomiya N."/>
            <person name="Nishio T."/>
            <person name="Okada M."/>
            <person name="Plessy C."/>
            <person name="Shibata K."/>
            <person name="Shiraki T."/>
            <person name="Suzuki S."/>
            <person name="Tagami M."/>
            <person name="Waki K."/>
            <person name="Watahiki A."/>
            <person name="Okamura-Oho Y."/>
            <person name="Suzuki H."/>
            <person name="Kawai J."/>
            <person name="Hayashizaki Y."/>
        </authorList>
    </citation>
    <scope>NUCLEOTIDE SEQUENCE [LARGE SCALE MRNA]</scope>
    <source>
        <strain>C57BL/6J</strain>
        <strain>NOD</strain>
        <tissue>Bone marrow</tissue>
        <tissue>Placenta</tissue>
        <tissue>Seminal vesicle</tissue>
        <tissue>Spleen</tissue>
    </source>
</reference>
<reference key="2">
    <citation type="journal article" date="2004" name="Genome Res.">
        <title>The status, quality, and expansion of the NIH full-length cDNA project: the Mammalian Gene Collection (MGC).</title>
        <authorList>
            <consortium name="The MGC Project Team"/>
        </authorList>
    </citation>
    <scope>NUCLEOTIDE SEQUENCE [LARGE SCALE MRNA]</scope>
    <source>
        <strain>FVB/N</strain>
        <tissue>Liver</tissue>
        <tissue>Mammary tumor</tissue>
    </source>
</reference>
<reference key="3">
    <citation type="journal article" date="2010" name="Cell">
        <title>A tissue-specific atlas of mouse protein phosphorylation and expression.</title>
        <authorList>
            <person name="Huttlin E.L."/>
            <person name="Jedrychowski M.P."/>
            <person name="Elias J.E."/>
            <person name="Goswami T."/>
            <person name="Rad R."/>
            <person name="Beausoleil S.A."/>
            <person name="Villen J."/>
            <person name="Haas W."/>
            <person name="Sowa M.E."/>
            <person name="Gygi S.P."/>
        </authorList>
    </citation>
    <scope>IDENTIFICATION BY MASS SPECTROMETRY [LARGE SCALE ANALYSIS]</scope>
    <source>
        <tissue>Testis</tissue>
    </source>
</reference>
<reference key="4">
    <citation type="journal article" date="2022" name="Mol. Cell">
        <title>Integrator endonuclease drives promoter-proximal termination at all RNA polymerase II-transcribed loci.</title>
        <authorList>
            <person name="Stein C.B."/>
            <person name="Field A.R."/>
            <person name="Mimoso C.A."/>
            <person name="Zhao C."/>
            <person name="Huang K.L."/>
            <person name="Wagner E.J."/>
            <person name="Adelman K."/>
        </authorList>
    </citation>
    <scope>FUNCTION</scope>
    <scope>CATALYTIC ACTIVITY</scope>
</reference>
<gene>
    <name evidence="3 5" type="primary">Ints11</name>
    <name type="synonym">Cpsf3l</name>
</gene>
<comment type="function">
    <text evidence="1 2">RNA endonuclease component of the integrator complex, a multiprotein complex that terminates RNA polymerase II (Pol II) transcription in the promoter-proximal region of genes (PubMed:36309014). The integrator complex provides a quality checkpoint during transcription elongation by driving premature transcription termination of transcripts that are unfavorably configured for transcriptional elongation: the complex terminates transcription by (1) catalyzing dephosphorylation of the C-terminal domain (CTD) of Pol II subunit POLR2A/RPB1 and SUPT5H/SPT5, (2) degrading the exiting nascent RNA transcript via endonuclease activity and (3) promoting the release of Pol II from bound DNA (By similarity). The integrator complex is also involved in terminating the synthesis of non-coding Pol II transcripts, such as enhancer RNAs (eRNAs), small nuclear RNAs (snRNAs), telomerase RNAs and long non-coding RNAs (lncRNAs) (By similarity). Within the integrator complex, INTS11 constitutes the RNA endonuclease subunit that degrades exiting nascent RNA transcripts (PubMed:36309014). Mediates recruitment of cytoplasmic dynein to the nuclear envelope, probably as component of the integrator complex (By similarity).</text>
</comment>
<comment type="cofactor">
    <cofactor evidence="1">
        <name>Zn(2+)</name>
        <dbReference type="ChEBI" id="CHEBI:29105"/>
    </cofactor>
</comment>
<comment type="activity regulation">
    <text evidence="1">The RNA endonuclease activity is inhibited by BRAT1 that forms hyrogen bond and hydrophobic interactions with the active site.</text>
</comment>
<comment type="subunit">
    <text evidence="1">Component of the Integrator complex, composed of core subunits INTS1, INTS2, INTS3, INTS4, INTS5, INTS6, INTS7, INTS8, INTS9/RC74, INTS10, INTS11/CPSF3L, INTS12, INTS13, INTS14 and INTS15. The core complex associates with protein phosphatase 2A subunits PPP2CA and PPP2R1A, to form the Integrator-PP2A (INTAC) complex. INTS11 is part of the RNA endonuclease subcomplex, composed of INTS4, INTS9, INTS11 and inositol hexakisphosphate (InsP6). Interacts with WDR73; interaction is required for the assembly of the RNA endonuclease subcomplex in the cytoplasm. Interacts with BRAT1; interaction is required for the assembly of the RNA endonuclease subcomplex and inhibits the endonuclease activity of INTS11 before formation of mature integrator complex.</text>
</comment>
<comment type="subcellular location">
    <subcellularLocation>
        <location evidence="1">Nucleus</location>
    </subcellularLocation>
    <subcellularLocation>
        <location evidence="1">Cytoplasm</location>
    </subcellularLocation>
</comment>
<comment type="PTM">
    <text evidence="1">Sumoylated; sumoylation regulates its subcellular location and is required for integrator complex integrity.</text>
</comment>
<comment type="similarity">
    <text evidence="4">Belongs to the metallo-beta-lactamase superfamily. RNA-metabolizing metallo-beta-lactamase-like family. INTS11 subfamily.</text>
</comment>
<comment type="sequence caution" evidence="4">
    <conflict type="erroneous initiation">
        <sequence resource="EMBL-CDS" id="AAH08240"/>
    </conflict>
    <text>Truncated N-terminus.</text>
</comment>